<name>SODM_HORVU</name>
<protein>
    <recommendedName>
        <fullName>Superoxide dismutase [Mn], mitochondrial</fullName>
        <ecNumber>1.15.1.1</ecNumber>
    </recommendedName>
</protein>
<evidence type="ECO:0000250" key="1"/>
<evidence type="ECO:0000305" key="2"/>
<reference key="1">
    <citation type="journal article" date="1991" name="Plant Physiol.">
        <title>Germin-like polypeptides increase in barley roots during salt stress.</title>
        <authorList>
            <person name="Hurkman W.J."/>
            <person name="Tao H.P."/>
            <person name="Tanaka C.K."/>
        </authorList>
    </citation>
    <scope>PROTEIN SEQUENCE</scope>
    <source>
        <strain>cv. CM 72</strain>
        <tissue>Root</tissue>
    </source>
</reference>
<gene>
    <name type="primary">SODA</name>
</gene>
<dbReference type="EC" id="1.15.1.1"/>
<dbReference type="GO" id="GO:0005759">
    <property type="term" value="C:mitochondrial matrix"/>
    <property type="evidence" value="ECO:0007669"/>
    <property type="project" value="UniProtKB-SubCell"/>
</dbReference>
<dbReference type="GO" id="GO:0046872">
    <property type="term" value="F:metal ion binding"/>
    <property type="evidence" value="ECO:0007669"/>
    <property type="project" value="UniProtKB-KW"/>
</dbReference>
<dbReference type="GO" id="GO:0004784">
    <property type="term" value="F:superoxide dismutase activity"/>
    <property type="evidence" value="ECO:0007669"/>
    <property type="project" value="UniProtKB-EC"/>
</dbReference>
<dbReference type="InterPro" id="IPR036324">
    <property type="entry name" value="Mn/Fe_SOD_N_sf"/>
</dbReference>
<dbReference type="SUPFAM" id="SSF46609">
    <property type="entry name" value="Fe,Mn superoxide dismutase (SOD), N-terminal domain"/>
    <property type="match status" value="1"/>
</dbReference>
<feature type="chain" id="PRO_0000159969" description="Superoxide dismutase [Mn], mitochondrial">
    <location>
        <begin position="1"/>
        <end position="20" status="greater than"/>
    </location>
</feature>
<feature type="non-terminal residue">
    <location>
        <position position="20"/>
    </location>
</feature>
<comment type="function">
    <text>Destroys superoxide anion radicals which are normally produced within the cells and which are toxic to biological systems.</text>
</comment>
<comment type="catalytic activity">
    <reaction>
        <text>2 superoxide + 2 H(+) = H2O2 + O2</text>
        <dbReference type="Rhea" id="RHEA:20696"/>
        <dbReference type="ChEBI" id="CHEBI:15378"/>
        <dbReference type="ChEBI" id="CHEBI:15379"/>
        <dbReference type="ChEBI" id="CHEBI:16240"/>
        <dbReference type="ChEBI" id="CHEBI:18421"/>
        <dbReference type="EC" id="1.15.1.1"/>
    </reaction>
</comment>
<comment type="cofactor">
    <cofactor evidence="1">
        <name>Mn(2+)</name>
        <dbReference type="ChEBI" id="CHEBI:29035"/>
    </cofactor>
    <text evidence="1">Binds 1 Mn(2+) ion per subunit.</text>
</comment>
<comment type="subunit">
    <text>Homotetramer.</text>
</comment>
<comment type="subcellular location">
    <subcellularLocation>
        <location>Mitochondrion matrix</location>
    </subcellularLocation>
</comment>
<comment type="similarity">
    <text evidence="2">Belongs to the iron/manganese superoxide dismutase family.</text>
</comment>
<sequence length="20" mass="2152">VATFTLPDLPYDYGALEPAV</sequence>
<accession>P28524</accession>
<organism>
    <name type="scientific">Hordeum vulgare</name>
    <name type="common">Barley</name>
    <dbReference type="NCBI Taxonomy" id="4513"/>
    <lineage>
        <taxon>Eukaryota</taxon>
        <taxon>Viridiplantae</taxon>
        <taxon>Streptophyta</taxon>
        <taxon>Embryophyta</taxon>
        <taxon>Tracheophyta</taxon>
        <taxon>Spermatophyta</taxon>
        <taxon>Magnoliopsida</taxon>
        <taxon>Liliopsida</taxon>
        <taxon>Poales</taxon>
        <taxon>Poaceae</taxon>
        <taxon>BOP clade</taxon>
        <taxon>Pooideae</taxon>
        <taxon>Triticodae</taxon>
        <taxon>Triticeae</taxon>
        <taxon>Hordeinae</taxon>
        <taxon>Hordeum</taxon>
    </lineage>
</organism>
<proteinExistence type="evidence at protein level"/>
<keyword id="KW-0903">Direct protein sequencing</keyword>
<keyword id="KW-0464">Manganese</keyword>
<keyword id="KW-0479">Metal-binding</keyword>
<keyword id="KW-0496">Mitochondrion</keyword>
<keyword id="KW-0560">Oxidoreductase</keyword>